<organism>
    <name type="scientific">Treponema pallidum (strain Nichols)</name>
    <dbReference type="NCBI Taxonomy" id="243276"/>
    <lineage>
        <taxon>Bacteria</taxon>
        <taxon>Pseudomonadati</taxon>
        <taxon>Spirochaetota</taxon>
        <taxon>Spirochaetia</taxon>
        <taxon>Spirochaetales</taxon>
        <taxon>Treponemataceae</taxon>
        <taxon>Treponema</taxon>
    </lineage>
</organism>
<evidence type="ECO:0000250" key="1"/>
<evidence type="ECO:0000305" key="2"/>
<dbReference type="EMBL" id="AE000520">
    <property type="protein sequence ID" value="AAC65515.1"/>
    <property type="molecule type" value="Genomic_DNA"/>
</dbReference>
<dbReference type="PIR" id="B71313">
    <property type="entry name" value="B71313"/>
</dbReference>
<dbReference type="RefSeq" id="WP_010881976.1">
    <property type="nucleotide sequence ID" value="NC_021490.2"/>
</dbReference>
<dbReference type="SMR" id="O83540"/>
<dbReference type="IntAct" id="O83540">
    <property type="interactions" value="7"/>
</dbReference>
<dbReference type="STRING" id="243276.TP_0528"/>
<dbReference type="TCDB" id="3.A.2.3.3">
    <property type="family name" value="the h+- or na+-translocating f-type, v-type and a-type atpase (f-atpase) superfamily"/>
</dbReference>
<dbReference type="EnsemblBacteria" id="AAC65515">
    <property type="protein sequence ID" value="AAC65515"/>
    <property type="gene ID" value="TP_0528"/>
</dbReference>
<dbReference type="KEGG" id="tpa:TP_0528"/>
<dbReference type="KEGG" id="tpw:TPANIC_0528"/>
<dbReference type="eggNOG" id="COG1156">
    <property type="taxonomic scope" value="Bacteria"/>
</dbReference>
<dbReference type="HOGENOM" id="CLU_022916_0_0_12"/>
<dbReference type="OrthoDB" id="9802718at2"/>
<dbReference type="Proteomes" id="UP000000811">
    <property type="component" value="Chromosome"/>
</dbReference>
<dbReference type="GO" id="GO:0005524">
    <property type="term" value="F:ATP binding"/>
    <property type="evidence" value="ECO:0007669"/>
    <property type="project" value="UniProtKB-UniRule"/>
</dbReference>
<dbReference type="GO" id="GO:0046933">
    <property type="term" value="F:proton-transporting ATP synthase activity, rotational mechanism"/>
    <property type="evidence" value="ECO:0007669"/>
    <property type="project" value="UniProtKB-UniRule"/>
</dbReference>
<dbReference type="GO" id="GO:0046961">
    <property type="term" value="F:proton-transporting ATPase activity, rotational mechanism"/>
    <property type="evidence" value="ECO:0007669"/>
    <property type="project" value="TreeGrafter"/>
</dbReference>
<dbReference type="GO" id="GO:0042777">
    <property type="term" value="P:proton motive force-driven plasma membrane ATP synthesis"/>
    <property type="evidence" value="ECO:0007669"/>
    <property type="project" value="UniProtKB-UniRule"/>
</dbReference>
<dbReference type="CDD" id="cd18112">
    <property type="entry name" value="ATP-synt_V_A-type_beta_C"/>
    <property type="match status" value="1"/>
</dbReference>
<dbReference type="CDD" id="cd18118">
    <property type="entry name" value="ATP-synt_V_A-type_beta_N"/>
    <property type="match status" value="1"/>
</dbReference>
<dbReference type="CDD" id="cd01135">
    <property type="entry name" value="V_A-ATPase_B"/>
    <property type="match status" value="1"/>
</dbReference>
<dbReference type="Gene3D" id="3.40.50.12240">
    <property type="match status" value="1"/>
</dbReference>
<dbReference type="HAMAP" id="MF_00310">
    <property type="entry name" value="ATP_synth_B_arch"/>
    <property type="match status" value="1"/>
</dbReference>
<dbReference type="InterPro" id="IPR055190">
    <property type="entry name" value="ATP-synt_VA_C"/>
</dbReference>
<dbReference type="InterPro" id="IPR004100">
    <property type="entry name" value="ATPase_F1/V1/A1_a/bsu_N"/>
</dbReference>
<dbReference type="InterPro" id="IPR000194">
    <property type="entry name" value="ATPase_F1/V1/A1_a/bsu_nucl-bd"/>
</dbReference>
<dbReference type="InterPro" id="IPR027417">
    <property type="entry name" value="P-loop_NTPase"/>
</dbReference>
<dbReference type="InterPro" id="IPR022879">
    <property type="entry name" value="V-ATPase_su_B/beta"/>
</dbReference>
<dbReference type="NCBIfam" id="NF003235">
    <property type="entry name" value="PRK04196.1"/>
    <property type="match status" value="1"/>
</dbReference>
<dbReference type="PANTHER" id="PTHR43389">
    <property type="entry name" value="V-TYPE PROTON ATPASE SUBUNIT B"/>
    <property type="match status" value="1"/>
</dbReference>
<dbReference type="PANTHER" id="PTHR43389:SF4">
    <property type="entry name" value="V-TYPE PROTON ATPASE SUBUNIT B"/>
    <property type="match status" value="1"/>
</dbReference>
<dbReference type="Pfam" id="PF00006">
    <property type="entry name" value="ATP-synt_ab"/>
    <property type="match status" value="1"/>
</dbReference>
<dbReference type="Pfam" id="PF02874">
    <property type="entry name" value="ATP-synt_ab_N"/>
    <property type="match status" value="1"/>
</dbReference>
<dbReference type="Pfam" id="PF22919">
    <property type="entry name" value="ATP-synt_VA_C"/>
    <property type="match status" value="1"/>
</dbReference>
<dbReference type="SUPFAM" id="SSF52540">
    <property type="entry name" value="P-loop containing nucleoside triphosphate hydrolases"/>
    <property type="match status" value="1"/>
</dbReference>
<sequence length="480" mass="53057">MKGVWYRGLSSIDGPIVVAKRREGAFYGEITAIRDRFGALRTGRIIDLSQECCLIQVFGSTLGLSLDGACLEFLDVPMQLRVCEGLMGRVFDGLGRPIDGFPEVLSSQLRNVNGYPINPYARVYPRDFIQTGISAIDGMNTLIRGQKLPIFSGNGLAHNRLAAQIIRQAKILGTDEAFVMVFAGMGIKHDVARFFVSSFEETGVLSKVVMFLSLADAPSIERIITPRCALTAAEYLAFEKNKHVLVIFTDMTNYCEALREVSTTRGEVPGRKGYPGYLYSDLAELYERAGRVKGSSGSVTQIPILTMPNDDISHPIPDLTGYITEGQIVLQRDLSQRGLYPPIGCLPSLSRLMKDGIGEGMTRADHHAVSSQLFASYARVQSVRSLASIVGEEELPALDKCYLRFGDLFEQYFLTQDEHEDRSISQTLDIGWSLLSLLPRTELYRIDPKLIDQYLTASCSAVSDQLRKAIEEARTPVADA</sequence>
<accession>O83540</accession>
<gene>
    <name type="primary">atpB2</name>
    <name type="ordered locus">TP_0528</name>
</gene>
<proteinExistence type="inferred from homology"/>
<reference key="1">
    <citation type="journal article" date="1998" name="Science">
        <title>Complete genome sequence of Treponema pallidum, the syphilis spirochete.</title>
        <authorList>
            <person name="Fraser C.M."/>
            <person name="Norris S.J."/>
            <person name="Weinstock G.M."/>
            <person name="White O."/>
            <person name="Sutton G.G."/>
            <person name="Dodson R.J."/>
            <person name="Gwinn M.L."/>
            <person name="Hickey E.K."/>
            <person name="Clayton R.A."/>
            <person name="Ketchum K.A."/>
            <person name="Sodergren E."/>
            <person name="Hardham J.M."/>
            <person name="McLeod M.P."/>
            <person name="Salzberg S.L."/>
            <person name="Peterson J.D."/>
            <person name="Khalak H.G."/>
            <person name="Richardson D.L."/>
            <person name="Howell J.K."/>
            <person name="Chidambaram M."/>
            <person name="Utterback T.R."/>
            <person name="McDonald L.A."/>
            <person name="Artiach P."/>
            <person name="Bowman C."/>
            <person name="Cotton M.D."/>
            <person name="Fujii C."/>
            <person name="Garland S.A."/>
            <person name="Hatch B."/>
            <person name="Horst K."/>
            <person name="Roberts K.M."/>
            <person name="Sandusky M."/>
            <person name="Weidman J.F."/>
            <person name="Smith H.O."/>
            <person name="Venter J.C."/>
        </authorList>
    </citation>
    <scope>NUCLEOTIDE SEQUENCE [LARGE SCALE GENOMIC DNA]</scope>
    <source>
        <strain>Nichols</strain>
    </source>
</reference>
<comment type="function">
    <text evidence="1">Produces ATP from ADP in the presence of a proton gradient across the membrane. The V-type beta chain is a regulatory subunit (By similarity).</text>
</comment>
<comment type="similarity">
    <text evidence="2">Belongs to the ATPase alpha/beta chains family.</text>
</comment>
<name>VATB2_TREPA</name>
<feature type="chain" id="PRO_0000144684" description="V-type ATP synthase beta chain 2">
    <location>
        <begin position="1"/>
        <end position="480"/>
    </location>
</feature>
<keyword id="KW-0066">ATP synthesis</keyword>
<keyword id="KW-0375">Hydrogen ion transport</keyword>
<keyword id="KW-0406">Ion transport</keyword>
<keyword id="KW-1185">Reference proteome</keyword>
<keyword id="KW-0813">Transport</keyword>
<protein>
    <recommendedName>
        <fullName>V-type ATP synthase beta chain 2</fullName>
    </recommendedName>
    <alternativeName>
        <fullName>V-ATPase subunit B 2</fullName>
    </alternativeName>
</protein>